<accession>O31958</accession>
<sequence>MTSYDQIWETFLNNCETSDFDVPQQEEDIYKSIRNAILHFNNRLRDNLKADNSTETVNRELSEDDLLILAHFLRYIFLLNKKTLFENTWQPFTNDVGIKNFGTQLNSLKQSVMDQKDEIERLILNAAVDYL</sequence>
<proteinExistence type="predicted"/>
<gene>
    <name type="primary">yomZ</name>
    <name type="ordered locus">BSU21170</name>
</gene>
<reference key="1">
    <citation type="journal article" date="1997" name="Nature">
        <title>The complete genome sequence of the Gram-positive bacterium Bacillus subtilis.</title>
        <authorList>
            <person name="Kunst F."/>
            <person name="Ogasawara N."/>
            <person name="Moszer I."/>
            <person name="Albertini A.M."/>
            <person name="Alloni G."/>
            <person name="Azevedo V."/>
            <person name="Bertero M.G."/>
            <person name="Bessieres P."/>
            <person name="Bolotin A."/>
            <person name="Borchert S."/>
            <person name="Borriss R."/>
            <person name="Boursier L."/>
            <person name="Brans A."/>
            <person name="Braun M."/>
            <person name="Brignell S.C."/>
            <person name="Bron S."/>
            <person name="Brouillet S."/>
            <person name="Bruschi C.V."/>
            <person name="Caldwell B."/>
            <person name="Capuano V."/>
            <person name="Carter N.M."/>
            <person name="Choi S.-K."/>
            <person name="Codani J.-J."/>
            <person name="Connerton I.F."/>
            <person name="Cummings N.J."/>
            <person name="Daniel R.A."/>
            <person name="Denizot F."/>
            <person name="Devine K.M."/>
            <person name="Duesterhoeft A."/>
            <person name="Ehrlich S.D."/>
            <person name="Emmerson P.T."/>
            <person name="Entian K.-D."/>
            <person name="Errington J."/>
            <person name="Fabret C."/>
            <person name="Ferrari E."/>
            <person name="Foulger D."/>
            <person name="Fritz C."/>
            <person name="Fujita M."/>
            <person name="Fujita Y."/>
            <person name="Fuma S."/>
            <person name="Galizzi A."/>
            <person name="Galleron N."/>
            <person name="Ghim S.-Y."/>
            <person name="Glaser P."/>
            <person name="Goffeau A."/>
            <person name="Golightly E.J."/>
            <person name="Grandi G."/>
            <person name="Guiseppi G."/>
            <person name="Guy B.J."/>
            <person name="Haga K."/>
            <person name="Haiech J."/>
            <person name="Harwood C.R."/>
            <person name="Henaut A."/>
            <person name="Hilbert H."/>
            <person name="Holsappel S."/>
            <person name="Hosono S."/>
            <person name="Hullo M.-F."/>
            <person name="Itaya M."/>
            <person name="Jones L.-M."/>
            <person name="Joris B."/>
            <person name="Karamata D."/>
            <person name="Kasahara Y."/>
            <person name="Klaerr-Blanchard M."/>
            <person name="Klein C."/>
            <person name="Kobayashi Y."/>
            <person name="Koetter P."/>
            <person name="Koningstein G."/>
            <person name="Krogh S."/>
            <person name="Kumano M."/>
            <person name="Kurita K."/>
            <person name="Lapidus A."/>
            <person name="Lardinois S."/>
            <person name="Lauber J."/>
            <person name="Lazarevic V."/>
            <person name="Lee S.-M."/>
            <person name="Levine A."/>
            <person name="Liu H."/>
            <person name="Masuda S."/>
            <person name="Mauel C."/>
            <person name="Medigue C."/>
            <person name="Medina N."/>
            <person name="Mellado R.P."/>
            <person name="Mizuno M."/>
            <person name="Moestl D."/>
            <person name="Nakai S."/>
            <person name="Noback M."/>
            <person name="Noone D."/>
            <person name="O'Reilly M."/>
            <person name="Ogawa K."/>
            <person name="Ogiwara A."/>
            <person name="Oudega B."/>
            <person name="Park S.-H."/>
            <person name="Parro V."/>
            <person name="Pohl T.M."/>
            <person name="Portetelle D."/>
            <person name="Porwollik S."/>
            <person name="Prescott A.M."/>
            <person name="Presecan E."/>
            <person name="Pujic P."/>
            <person name="Purnelle B."/>
            <person name="Rapoport G."/>
            <person name="Rey M."/>
            <person name="Reynolds S."/>
            <person name="Rieger M."/>
            <person name="Rivolta C."/>
            <person name="Rocha E."/>
            <person name="Roche B."/>
            <person name="Rose M."/>
            <person name="Sadaie Y."/>
            <person name="Sato T."/>
            <person name="Scanlan E."/>
            <person name="Schleich S."/>
            <person name="Schroeter R."/>
            <person name="Scoffone F."/>
            <person name="Sekiguchi J."/>
            <person name="Sekowska A."/>
            <person name="Seror S.J."/>
            <person name="Serror P."/>
            <person name="Shin B.-S."/>
            <person name="Soldo B."/>
            <person name="Sorokin A."/>
            <person name="Tacconi E."/>
            <person name="Takagi T."/>
            <person name="Takahashi H."/>
            <person name="Takemaru K."/>
            <person name="Takeuchi M."/>
            <person name="Tamakoshi A."/>
            <person name="Tanaka T."/>
            <person name="Terpstra P."/>
            <person name="Tognoni A."/>
            <person name="Tosato V."/>
            <person name="Uchiyama S."/>
            <person name="Vandenbol M."/>
            <person name="Vannier F."/>
            <person name="Vassarotti A."/>
            <person name="Viari A."/>
            <person name="Wambutt R."/>
            <person name="Wedler E."/>
            <person name="Wedler H."/>
            <person name="Weitzenegger T."/>
            <person name="Winters P."/>
            <person name="Wipat A."/>
            <person name="Yamamoto H."/>
            <person name="Yamane K."/>
            <person name="Yasumoto K."/>
            <person name="Yata K."/>
            <person name="Yoshida K."/>
            <person name="Yoshikawa H.-F."/>
            <person name="Zumstein E."/>
            <person name="Yoshikawa H."/>
            <person name="Danchin A."/>
        </authorList>
    </citation>
    <scope>NUCLEOTIDE SEQUENCE [LARGE SCALE GENOMIC DNA]</scope>
    <source>
        <strain>168</strain>
    </source>
</reference>
<protein>
    <recommendedName>
        <fullName>SPbeta prophage-derived uncharacterized protein YomZ</fullName>
    </recommendedName>
</protein>
<organism>
    <name type="scientific">Bacillus subtilis (strain 168)</name>
    <dbReference type="NCBI Taxonomy" id="224308"/>
    <lineage>
        <taxon>Bacteria</taxon>
        <taxon>Bacillati</taxon>
        <taxon>Bacillota</taxon>
        <taxon>Bacilli</taxon>
        <taxon>Bacillales</taxon>
        <taxon>Bacillaceae</taxon>
        <taxon>Bacillus</taxon>
    </lineage>
</organism>
<name>YOMZ_BACSU</name>
<keyword id="KW-1185">Reference proteome</keyword>
<feature type="chain" id="PRO_0000360602" description="SPbeta prophage-derived uncharacterized protein YomZ">
    <location>
        <begin position="1"/>
        <end position="131"/>
    </location>
</feature>
<dbReference type="EMBL" id="AL009126">
    <property type="protein sequence ID" value="CAB14035.1"/>
    <property type="molecule type" value="Genomic_DNA"/>
</dbReference>
<dbReference type="RefSeq" id="NP_390000.1">
    <property type="nucleotide sequence ID" value="NC_000964.3"/>
</dbReference>
<dbReference type="RefSeq" id="WP_004399452.1">
    <property type="nucleotide sequence ID" value="NZ_OZ025638.1"/>
</dbReference>
<dbReference type="SMR" id="O31958"/>
<dbReference type="FunCoup" id="O31958">
    <property type="interactions" value="55"/>
</dbReference>
<dbReference type="STRING" id="224308.BSU21170"/>
<dbReference type="PaxDb" id="224308-BSU21170"/>
<dbReference type="EnsemblBacteria" id="CAB14035">
    <property type="protein sequence ID" value="CAB14035"/>
    <property type="gene ID" value="BSU_21170"/>
</dbReference>
<dbReference type="GeneID" id="939156"/>
<dbReference type="KEGG" id="bsu:BSU21170"/>
<dbReference type="PATRIC" id="fig|224308.179.peg.2311"/>
<dbReference type="eggNOG" id="ENOG5030E7G">
    <property type="taxonomic scope" value="Bacteria"/>
</dbReference>
<dbReference type="InParanoid" id="O31958"/>
<dbReference type="OrthoDB" id="2893605at2"/>
<dbReference type="BioCyc" id="BSUB:BSU21170-MONOMER"/>
<dbReference type="Proteomes" id="UP000001570">
    <property type="component" value="Chromosome"/>
</dbReference>